<evidence type="ECO:0000250" key="1"/>
<evidence type="ECO:0000255" key="2"/>
<evidence type="ECO:0000305" key="3"/>
<sequence length="503" mass="52814">MVTKERNAALKIVMLVASALTLHPQQALAQTAGRPLADVVGKTLCTYSKTAKRQAANLAQTLQRASSAAKQSRQAQQLAALALAKLPDYKEAAATLLIYATHKIQDAQASIENWTGENTKLVGQAMYSSGRIDELMLLLEGHREDGANGQDKTCLGAAAGGNTVNEFVKTECDTESGHNIEADNSNIGQAATTLSQESTDPEASGGASCKITANLATDYDSHANELPLLGGLLTIHNAGGFKTGQSLQTAAPTNKLISALKNKGAGVAAKLATVTSAAPTSKQELKTLLASKGERAKLQAANDEYNNWKPGAKPEDFDAHIKKVFGAEDGKDSAYAIALEGISIEAPLGGGQTQNKQLYSMQPKDLMAALIGTIAELQTAAATKPACPGHKQTTTESDALCSKIKDANECNSKHFCSYNGTETDSAKKCKYNATKASASDAPVTQAQTTSRSETPAEKCTGKKKDDCKDGCKWEAETCKDSSILLTKNFALSVVSAALVALLF</sequence>
<name>VSA1_TRYBB</name>
<protein>
    <recommendedName>
        <fullName>Variant surface glycoprotein AnTaT 1.1</fullName>
        <shortName>VSG</shortName>
    </recommendedName>
    <alternativeName>
        <fullName>Expression-linked copy</fullName>
        <shortName>ELC</shortName>
    </alternativeName>
</protein>
<feature type="signal peptide">
    <location>
        <begin position="1"/>
        <end position="29"/>
    </location>
</feature>
<feature type="chain" id="PRO_0000036409" description="Variant surface glycoprotein AnTaT 1.1">
    <location>
        <begin position="30"/>
        <end position="480"/>
    </location>
</feature>
<feature type="propeptide" id="PRO_0000036410" description="Removed in mature form" evidence="1">
    <location>
        <begin position="481"/>
        <end position="503"/>
    </location>
</feature>
<feature type="lipid moiety-binding region" description="GPI-anchor amidated aspartate" evidence="1">
    <location>
        <position position="480"/>
    </location>
</feature>
<feature type="glycosylation site" description="N-linked (GlcNAc...) asparagine" evidence="2">
    <location>
        <position position="113"/>
    </location>
</feature>
<feature type="glycosylation site" description="N-linked (GlcNAc...) asparagine" evidence="2">
    <location>
        <position position="419"/>
    </location>
</feature>
<feature type="glycosylation site" description="N-linked (GlcNAc...) asparagine" evidence="2">
    <location>
        <position position="432"/>
    </location>
</feature>
<feature type="disulfide bond" evidence="1">
    <location>
        <begin position="45"/>
        <end position="172"/>
    </location>
</feature>
<feature type="disulfide bond" evidence="1">
    <location>
        <begin position="154"/>
        <end position="209"/>
    </location>
</feature>
<feature type="sequence conflict" description="In Ref. 2; CAA33809." evidence="3" ref="2">
    <original>A</original>
    <variation>P</variation>
    <location>
        <position position="334"/>
    </location>
</feature>
<feature type="sequence conflict" description="In Ref. 2; CAA33809." evidence="3" ref="2">
    <original>A</original>
    <variation>V</variation>
    <location>
        <position position="346"/>
    </location>
</feature>
<feature type="sequence conflict" description="In Ref. 3." evidence="3" ref="3">
    <original>N</original>
    <variation>K</variation>
    <location>
        <position position="419"/>
    </location>
</feature>
<comment type="function">
    <text>VSG forms a coat on the surface of the parasite. The trypanosome evades the immune response of the host by expressing a series of antigenically distinct VSGs from an estimated 1000 VSG genes.</text>
</comment>
<comment type="subcellular location">
    <subcellularLocation>
        <location>Cell membrane</location>
        <topology>Lipid-anchor</topology>
        <topology>GPI-anchor</topology>
    </subcellularLocation>
    <text evidence="1">A soluble form is released from ruptured cells by the action of a PI-PLC.</text>
</comment>
<organism>
    <name type="scientific">Trypanosoma brucei brucei</name>
    <dbReference type="NCBI Taxonomy" id="5702"/>
    <lineage>
        <taxon>Eukaryota</taxon>
        <taxon>Discoba</taxon>
        <taxon>Euglenozoa</taxon>
        <taxon>Kinetoplastea</taxon>
        <taxon>Metakinetoplastina</taxon>
        <taxon>Trypanosomatida</taxon>
        <taxon>Trypanosomatidae</taxon>
        <taxon>Trypanosoma</taxon>
    </lineage>
</organism>
<keyword id="KW-1003">Cell membrane</keyword>
<keyword id="KW-1015">Disulfide bond</keyword>
<keyword id="KW-0325">Glycoprotein</keyword>
<keyword id="KW-0336">GPI-anchor</keyword>
<keyword id="KW-0449">Lipoprotein</keyword>
<keyword id="KW-0472">Membrane</keyword>
<keyword id="KW-0732">Signal</keyword>
<keyword id="KW-0821">Trypanosomiasis</keyword>
<proteinExistence type="evidence at transcript level"/>
<accession>P06015</accession>
<accession>Q26722</accession>
<dbReference type="EMBL" id="X01843">
    <property type="protein sequence ID" value="CAA25971.1"/>
    <property type="molecule type" value="Genomic_DNA"/>
</dbReference>
<dbReference type="EMBL" id="X15817">
    <property type="protein sequence ID" value="CAA33809.1"/>
    <property type="molecule type" value="Genomic_DNA"/>
</dbReference>
<dbReference type="EMBL" id="M12005">
    <property type="protein sequence ID" value="AAA30162.1"/>
    <property type="molecule type" value="Genomic_DNA"/>
</dbReference>
<dbReference type="EMBL" id="J01213">
    <property type="protein sequence ID" value="AAA30280.1"/>
    <property type="molecule type" value="mRNA"/>
</dbReference>
<dbReference type="PIR" id="S07174">
    <property type="entry name" value="VMUT1B"/>
</dbReference>
<dbReference type="SMR" id="P06015"/>
<dbReference type="ABCD" id="P06015">
    <property type="antibodies" value="17 sequenced antibodies"/>
</dbReference>
<dbReference type="GO" id="GO:0005886">
    <property type="term" value="C:plasma membrane"/>
    <property type="evidence" value="ECO:0007669"/>
    <property type="project" value="UniProtKB-SubCell"/>
</dbReference>
<dbReference type="GO" id="GO:0098552">
    <property type="term" value="C:side of membrane"/>
    <property type="evidence" value="ECO:0007669"/>
    <property type="project" value="UniProtKB-KW"/>
</dbReference>
<dbReference type="GO" id="GO:0042783">
    <property type="term" value="P:symbiont-mediated evasion of host immune response"/>
    <property type="evidence" value="ECO:0007669"/>
    <property type="project" value="InterPro"/>
</dbReference>
<dbReference type="Gene3D" id="3.30.1680.30">
    <property type="match status" value="1"/>
</dbReference>
<dbReference type="Gene3D" id="3.30.1680.40">
    <property type="match status" value="1"/>
</dbReference>
<dbReference type="Gene3D" id="3.90.150.10">
    <property type="entry name" value="Variant Surface Glycoprotein, subunit A domain 1"/>
    <property type="match status" value="1"/>
</dbReference>
<dbReference type="Gene3D" id="1.10.470.10">
    <property type="entry name" value="Variant Surface Glycoprotein, subunit A, domain 2"/>
    <property type="match status" value="1"/>
</dbReference>
<dbReference type="InterPro" id="IPR001812">
    <property type="entry name" value="Trypano_VSG_A_N_dom"/>
</dbReference>
<dbReference type="InterPro" id="IPR019609">
    <property type="entry name" value="Variant_surf_glycoprt_trypan_C"/>
</dbReference>
<dbReference type="Pfam" id="PF00913">
    <property type="entry name" value="Trypan_glycop"/>
    <property type="match status" value="1"/>
</dbReference>
<dbReference type="Pfam" id="PF10659">
    <property type="entry name" value="Trypan_glycop_C"/>
    <property type="match status" value="1"/>
</dbReference>
<dbReference type="SUPFAM" id="SSF58087">
    <property type="entry name" value="Variant surface glycoprotein (N-terminal domain)"/>
    <property type="match status" value="1"/>
</dbReference>
<reference key="1">
    <citation type="journal article" date="1983" name="EMBO J.">
        <title>Gene activation and re-expression of a Trypanosoma brucei variant surface glycoprotein.</title>
        <authorList>
            <person name="Michiels F."/>
            <person name="Matthyssens G."/>
            <person name="Kronenberger P."/>
            <person name="Pays E."/>
            <person name="Dero B."/>
            <person name="van Assel S."/>
            <person name="Darrille M."/>
            <person name="Cravador A."/>
            <person name="Steinert M."/>
            <person name="Hamers R."/>
        </authorList>
    </citation>
    <scope>NUCLEOTIDE SEQUENCE [GENOMIC DNA]</scope>
</reference>
<reference key="2">
    <citation type="journal article" date="1990" name="EMBO J.">
        <title>Telomere interactions may condition the programming of antigen expression in Trypanosoma brucei.</title>
        <authorList>
            <person name="van der Werf A."/>
            <person name="van Assel S."/>
            <person name="Aerts D."/>
            <person name="Steinert M."/>
            <person name="Pays E."/>
        </authorList>
    </citation>
    <scope>NUCLEOTIDE SEQUENCE [GENOMIC DNA] OF 1-416</scope>
    <source>
        <strain>EATRO 1125</strain>
    </source>
</reference>
<reference key="3">
    <citation type="journal article" date="1981" name="Nature">
        <title>Two variant surface glycoproteins of Trypanosoma brucei have a conserved C-terminus.</title>
        <authorList>
            <person name="Matthyssens G."/>
            <person name="Michiels F."/>
            <person name="Hamers R."/>
            <person name="Pays E."/>
            <person name="Steinert M."/>
        </authorList>
    </citation>
    <scope>NUCLEOTIDE SEQUENCE [MRNA] OF 391-503</scope>
</reference>
<reference key="4">
    <citation type="journal article" date="1985" name="Cell">
        <title>Trypanosoma brucei: the extent of conversion in antigen genes may be related to the DNA coding specificity.</title>
        <authorList>
            <person name="Pays E."/>
            <person name="Houard S."/>
            <person name="Pays A."/>
            <person name="van Assel S."/>
            <person name="Dupont F."/>
            <person name="Aerts D."/>
            <person name="Huet-Duviller G."/>
            <person name="Gomes V."/>
            <person name="Richet C."/>
            <person name="Degand P."/>
            <person name="van Meirvenne N."/>
            <person name="Steinert M."/>
        </authorList>
    </citation>
    <scope>NUCLEOTIDE SEQUENCE [GENOMIC DNA] OF 270-344</scope>
</reference>